<gene>
    <name evidence="1" type="primary">pdxA</name>
    <name type="ordered locus">EcE24377A_0056</name>
</gene>
<accession>A7ZHE5</accession>
<name>PDXA_ECO24</name>
<sequence>MVKTQRVVITPGEPAGIGPDLVVQLAQREWPVELVVCADATLLTDRAAMLGLPLTLRPYSPNSPAQPQTTGTLTLLPVALRESVTAGQLAIENGHYVVETLARACDGCLNGEFAALITGPVHKGVINDAGIPFTGHTEFFEERSQAKKVVMMLATEELRVALATTHLPLRDIADAITPALLHEVIAILHHDLRTKFGIAEPRILVCGLNPHAGEGGHMGTEEIDTIIPVLDELRAQGMKLNGPLPADTLFQPKYLDNADAVLAMYHDQGLPVLKYQGFGRGVNITLGLPFIRTSVDHGTALELAGRGEADVGSFITALNLAIKMIVNTQ</sequence>
<organism>
    <name type="scientific">Escherichia coli O139:H28 (strain E24377A / ETEC)</name>
    <dbReference type="NCBI Taxonomy" id="331111"/>
    <lineage>
        <taxon>Bacteria</taxon>
        <taxon>Pseudomonadati</taxon>
        <taxon>Pseudomonadota</taxon>
        <taxon>Gammaproteobacteria</taxon>
        <taxon>Enterobacterales</taxon>
        <taxon>Enterobacteriaceae</taxon>
        <taxon>Escherichia</taxon>
    </lineage>
</organism>
<reference key="1">
    <citation type="journal article" date="2008" name="J. Bacteriol.">
        <title>The pangenome structure of Escherichia coli: comparative genomic analysis of E. coli commensal and pathogenic isolates.</title>
        <authorList>
            <person name="Rasko D.A."/>
            <person name="Rosovitz M.J."/>
            <person name="Myers G.S.A."/>
            <person name="Mongodin E.F."/>
            <person name="Fricke W.F."/>
            <person name="Gajer P."/>
            <person name="Crabtree J."/>
            <person name="Sebaihia M."/>
            <person name="Thomson N.R."/>
            <person name="Chaudhuri R."/>
            <person name="Henderson I.R."/>
            <person name="Sperandio V."/>
            <person name="Ravel J."/>
        </authorList>
    </citation>
    <scope>NUCLEOTIDE SEQUENCE [LARGE SCALE GENOMIC DNA]</scope>
    <source>
        <strain>E24377A / ETEC</strain>
    </source>
</reference>
<comment type="function">
    <text evidence="1">Catalyzes the NAD(P)-dependent oxidation of 4-(phosphooxy)-L-threonine (HTP) into 2-amino-3-oxo-4-(phosphooxy)butyric acid which spontaneously decarboxylates to form 3-amino-2-oxopropyl phosphate (AHAP).</text>
</comment>
<comment type="catalytic activity">
    <reaction evidence="1">
        <text>4-(phosphooxy)-L-threonine + NAD(+) = 3-amino-2-oxopropyl phosphate + CO2 + NADH</text>
        <dbReference type="Rhea" id="RHEA:32275"/>
        <dbReference type="ChEBI" id="CHEBI:16526"/>
        <dbReference type="ChEBI" id="CHEBI:57279"/>
        <dbReference type="ChEBI" id="CHEBI:57540"/>
        <dbReference type="ChEBI" id="CHEBI:57945"/>
        <dbReference type="ChEBI" id="CHEBI:58452"/>
        <dbReference type="EC" id="1.1.1.262"/>
    </reaction>
</comment>
<comment type="cofactor">
    <cofactor evidence="1">
        <name>Zn(2+)</name>
        <dbReference type="ChEBI" id="CHEBI:29105"/>
    </cofactor>
    <cofactor evidence="1">
        <name>Mg(2+)</name>
        <dbReference type="ChEBI" id="CHEBI:18420"/>
    </cofactor>
    <cofactor evidence="1">
        <name>Co(2+)</name>
        <dbReference type="ChEBI" id="CHEBI:48828"/>
    </cofactor>
    <text evidence="1">Binds 1 divalent metal cation per subunit. Can use ions such as Zn(2+), Mg(2+) or Co(2+).</text>
</comment>
<comment type="pathway">
    <text evidence="1">Cofactor biosynthesis; pyridoxine 5'-phosphate biosynthesis; pyridoxine 5'-phosphate from D-erythrose 4-phosphate: step 4/5.</text>
</comment>
<comment type="subunit">
    <text evidence="1">Homodimer.</text>
</comment>
<comment type="subcellular location">
    <subcellularLocation>
        <location evidence="1">Cytoplasm</location>
    </subcellularLocation>
</comment>
<comment type="miscellaneous">
    <text evidence="1">The active site is located at the dimer interface.</text>
</comment>
<comment type="similarity">
    <text evidence="1">Belongs to the PdxA family.</text>
</comment>
<dbReference type="EC" id="1.1.1.262" evidence="1"/>
<dbReference type="EMBL" id="CP000800">
    <property type="protein sequence ID" value="ABV18686.1"/>
    <property type="molecule type" value="Genomic_DNA"/>
</dbReference>
<dbReference type="RefSeq" id="WP_000241259.1">
    <property type="nucleotide sequence ID" value="NC_009801.1"/>
</dbReference>
<dbReference type="SMR" id="A7ZHE5"/>
<dbReference type="KEGG" id="ecw:EcE24377A_0056"/>
<dbReference type="HOGENOM" id="CLU_040168_1_0_6"/>
<dbReference type="UniPathway" id="UPA00244">
    <property type="reaction ID" value="UER00312"/>
</dbReference>
<dbReference type="Proteomes" id="UP000001122">
    <property type="component" value="Chromosome"/>
</dbReference>
<dbReference type="GO" id="GO:0005737">
    <property type="term" value="C:cytoplasm"/>
    <property type="evidence" value="ECO:0007669"/>
    <property type="project" value="UniProtKB-SubCell"/>
</dbReference>
<dbReference type="GO" id="GO:0050570">
    <property type="term" value="F:4-hydroxythreonine-4-phosphate dehydrogenase activity"/>
    <property type="evidence" value="ECO:0007669"/>
    <property type="project" value="UniProtKB-UniRule"/>
</dbReference>
<dbReference type="GO" id="GO:0050897">
    <property type="term" value="F:cobalt ion binding"/>
    <property type="evidence" value="ECO:0007669"/>
    <property type="project" value="UniProtKB-UniRule"/>
</dbReference>
<dbReference type="GO" id="GO:0000287">
    <property type="term" value="F:magnesium ion binding"/>
    <property type="evidence" value="ECO:0007669"/>
    <property type="project" value="UniProtKB-UniRule"/>
</dbReference>
<dbReference type="GO" id="GO:0051287">
    <property type="term" value="F:NAD binding"/>
    <property type="evidence" value="ECO:0007669"/>
    <property type="project" value="InterPro"/>
</dbReference>
<dbReference type="GO" id="GO:0008270">
    <property type="term" value="F:zinc ion binding"/>
    <property type="evidence" value="ECO:0007669"/>
    <property type="project" value="UniProtKB-UniRule"/>
</dbReference>
<dbReference type="GO" id="GO:0042823">
    <property type="term" value="P:pyridoxal phosphate biosynthetic process"/>
    <property type="evidence" value="ECO:0007669"/>
    <property type="project" value="UniProtKB-UniRule"/>
</dbReference>
<dbReference type="GO" id="GO:0008615">
    <property type="term" value="P:pyridoxine biosynthetic process"/>
    <property type="evidence" value="ECO:0007669"/>
    <property type="project" value="UniProtKB-UniRule"/>
</dbReference>
<dbReference type="FunFam" id="3.40.718.10:FF:000010">
    <property type="entry name" value="4-hydroxythreonine-4-phosphate dehydrogenase"/>
    <property type="match status" value="1"/>
</dbReference>
<dbReference type="Gene3D" id="3.40.718.10">
    <property type="entry name" value="Isopropylmalate Dehydrogenase"/>
    <property type="match status" value="1"/>
</dbReference>
<dbReference type="HAMAP" id="MF_00536">
    <property type="entry name" value="PdxA"/>
    <property type="match status" value="1"/>
</dbReference>
<dbReference type="InterPro" id="IPR037510">
    <property type="entry name" value="PdxA"/>
</dbReference>
<dbReference type="InterPro" id="IPR005255">
    <property type="entry name" value="PdxA_fam"/>
</dbReference>
<dbReference type="NCBIfam" id="TIGR00557">
    <property type="entry name" value="pdxA"/>
    <property type="match status" value="1"/>
</dbReference>
<dbReference type="PANTHER" id="PTHR30004">
    <property type="entry name" value="4-HYDROXYTHREONINE-4-PHOSPHATE DEHYDROGENASE"/>
    <property type="match status" value="1"/>
</dbReference>
<dbReference type="PANTHER" id="PTHR30004:SF5">
    <property type="entry name" value="4-HYDROXYTHREONINE-4-PHOSPHATE DEHYDROGENASE"/>
    <property type="match status" value="1"/>
</dbReference>
<dbReference type="Pfam" id="PF04166">
    <property type="entry name" value="PdxA"/>
    <property type="match status" value="1"/>
</dbReference>
<dbReference type="SUPFAM" id="SSF53659">
    <property type="entry name" value="Isocitrate/Isopropylmalate dehydrogenase-like"/>
    <property type="match status" value="1"/>
</dbReference>
<proteinExistence type="inferred from homology"/>
<keyword id="KW-0170">Cobalt</keyword>
<keyword id="KW-0963">Cytoplasm</keyword>
<keyword id="KW-0460">Magnesium</keyword>
<keyword id="KW-0479">Metal-binding</keyword>
<keyword id="KW-0520">NAD</keyword>
<keyword id="KW-0521">NADP</keyword>
<keyword id="KW-0560">Oxidoreductase</keyword>
<keyword id="KW-0664">Pyridoxine biosynthesis</keyword>
<keyword id="KW-1185">Reference proteome</keyword>
<keyword id="KW-0862">Zinc</keyword>
<feature type="chain" id="PRO_1000061030" description="4-hydroxythreonine-4-phosphate dehydrogenase">
    <location>
        <begin position="1"/>
        <end position="329"/>
    </location>
</feature>
<feature type="binding site" evidence="1">
    <location>
        <position position="136"/>
    </location>
    <ligand>
        <name>substrate</name>
    </ligand>
</feature>
<feature type="binding site" evidence="1">
    <location>
        <position position="137"/>
    </location>
    <ligand>
        <name>substrate</name>
    </ligand>
</feature>
<feature type="binding site" evidence="1">
    <location>
        <position position="166"/>
    </location>
    <ligand>
        <name>a divalent metal cation</name>
        <dbReference type="ChEBI" id="CHEBI:60240"/>
        <note>ligand shared between dimeric partners</note>
    </ligand>
</feature>
<feature type="binding site" evidence="1">
    <location>
        <position position="211"/>
    </location>
    <ligand>
        <name>a divalent metal cation</name>
        <dbReference type="ChEBI" id="CHEBI:60240"/>
        <note>ligand shared between dimeric partners</note>
    </ligand>
</feature>
<feature type="binding site" evidence="1">
    <location>
        <position position="266"/>
    </location>
    <ligand>
        <name>a divalent metal cation</name>
        <dbReference type="ChEBI" id="CHEBI:60240"/>
        <note>ligand shared between dimeric partners</note>
    </ligand>
</feature>
<feature type="binding site" evidence="1">
    <location>
        <position position="274"/>
    </location>
    <ligand>
        <name>substrate</name>
    </ligand>
</feature>
<feature type="binding site" evidence="1">
    <location>
        <position position="283"/>
    </location>
    <ligand>
        <name>substrate</name>
    </ligand>
</feature>
<feature type="binding site" evidence="1">
    <location>
        <position position="292"/>
    </location>
    <ligand>
        <name>substrate</name>
    </ligand>
</feature>
<evidence type="ECO:0000255" key="1">
    <source>
        <dbReference type="HAMAP-Rule" id="MF_00536"/>
    </source>
</evidence>
<protein>
    <recommendedName>
        <fullName evidence="1">4-hydroxythreonine-4-phosphate dehydrogenase</fullName>
        <ecNumber evidence="1">1.1.1.262</ecNumber>
    </recommendedName>
    <alternativeName>
        <fullName evidence="1">4-(phosphohydroxy)-L-threonine dehydrogenase</fullName>
    </alternativeName>
</protein>